<name>HXD4_PANPA</name>
<proteinExistence type="inferred from homology"/>
<accession>A1YFY3</accession>
<gene>
    <name type="primary">HOXD4</name>
</gene>
<organism>
    <name type="scientific">Pan paniscus</name>
    <name type="common">Pygmy chimpanzee</name>
    <name type="synonym">Bonobo</name>
    <dbReference type="NCBI Taxonomy" id="9597"/>
    <lineage>
        <taxon>Eukaryota</taxon>
        <taxon>Metazoa</taxon>
        <taxon>Chordata</taxon>
        <taxon>Craniata</taxon>
        <taxon>Vertebrata</taxon>
        <taxon>Euteleostomi</taxon>
        <taxon>Mammalia</taxon>
        <taxon>Eutheria</taxon>
        <taxon>Euarchontoglires</taxon>
        <taxon>Primates</taxon>
        <taxon>Haplorrhini</taxon>
        <taxon>Catarrhini</taxon>
        <taxon>Hominidae</taxon>
        <taxon>Pan</taxon>
    </lineage>
</organism>
<reference key="1">
    <citation type="submission" date="2006-08" db="EMBL/GenBank/DDBJ databases">
        <title>Positive selection in transcription factor genes on the human lineage.</title>
        <authorList>
            <person name="Nickel G.C."/>
            <person name="Tefft D.L."/>
            <person name="Trevarthen K."/>
            <person name="Funt J."/>
            <person name="Adams M.D."/>
        </authorList>
    </citation>
    <scope>NUCLEOTIDE SEQUENCE [GENOMIC DNA]</scope>
</reference>
<sequence length="255" mass="27835">MVMSSYMVNSKYVDPKFPPCEEYLQGGYLGEQGADYYGGGAQGADFQPPGLYPRPDFGEQPFGGSGPGPGSALPARGHGQEPGGPGGHYAAPGEPCPAPPAPPPAPLPGARACSQSDPKQPPPGTALKQPAVVYPWMKKVHVNSVNPNYTGGEPKRSRTAYTRQQVLELEKEFHFNRYLTRRRRIEIAHTLCLSERQIKIWFQNRRMKWKKDHKLPNTKGRSSSSSSSSSCSSSVAPSQHLQPMAKDHHTDLTTL</sequence>
<keyword id="KW-0217">Developmental protein</keyword>
<keyword id="KW-0238">DNA-binding</keyword>
<keyword id="KW-0371">Homeobox</keyword>
<keyword id="KW-0539">Nucleus</keyword>
<keyword id="KW-1185">Reference proteome</keyword>
<keyword id="KW-0804">Transcription</keyword>
<keyword id="KW-0805">Transcription regulation</keyword>
<evidence type="ECO:0000250" key="1"/>
<evidence type="ECO:0000250" key="2">
    <source>
        <dbReference type="UniProtKB" id="P09016"/>
    </source>
</evidence>
<evidence type="ECO:0000255" key="3">
    <source>
        <dbReference type="PROSITE-ProRule" id="PRU00108"/>
    </source>
</evidence>
<evidence type="ECO:0000256" key="4">
    <source>
        <dbReference type="SAM" id="MobiDB-lite"/>
    </source>
</evidence>
<evidence type="ECO:0000305" key="5"/>
<feature type="chain" id="PRO_0000285435" description="Homeobox protein Hox-D4">
    <location>
        <begin position="1"/>
        <end position="255"/>
    </location>
</feature>
<feature type="DNA-binding region" description="Homeobox" evidence="3">
    <location>
        <begin position="154"/>
        <end position="213"/>
    </location>
</feature>
<feature type="region of interest" description="Disordered" evidence="4">
    <location>
        <begin position="31"/>
        <end position="128"/>
    </location>
</feature>
<feature type="region of interest" description="Disordered" evidence="4">
    <location>
        <begin position="212"/>
        <end position="255"/>
    </location>
</feature>
<feature type="short sequence motif" description="Antp-type hexapeptide">
    <location>
        <begin position="133"/>
        <end position="138"/>
    </location>
</feature>
<feature type="compositionally biased region" description="Pro residues" evidence="4">
    <location>
        <begin position="94"/>
        <end position="107"/>
    </location>
</feature>
<feature type="compositionally biased region" description="Low complexity" evidence="4">
    <location>
        <begin position="222"/>
        <end position="234"/>
    </location>
</feature>
<feature type="compositionally biased region" description="Basic and acidic residues" evidence="4">
    <location>
        <begin position="245"/>
        <end position="255"/>
    </location>
</feature>
<protein>
    <recommendedName>
        <fullName>Homeobox protein Hox-D4</fullName>
    </recommendedName>
</protein>
<dbReference type="EMBL" id="DQ977178">
    <property type="protein sequence ID" value="ABM54208.1"/>
    <property type="molecule type" value="Genomic_DNA"/>
</dbReference>
<dbReference type="RefSeq" id="XP_034810454.1">
    <property type="nucleotide sequence ID" value="XM_034954563.4"/>
</dbReference>
<dbReference type="BMRB" id="A1YFY3"/>
<dbReference type="SMR" id="A1YFY3"/>
<dbReference type="STRING" id="9597.ENSPPAP00000023646"/>
<dbReference type="Ensembl" id="ENSPPAT00000046471.1">
    <property type="protein sequence ID" value="ENSPPAP00000023646.1"/>
    <property type="gene ID" value="ENSPPAG00000034992.1"/>
</dbReference>
<dbReference type="GeneID" id="117979411"/>
<dbReference type="eggNOG" id="KOG0489">
    <property type="taxonomic scope" value="Eukaryota"/>
</dbReference>
<dbReference type="GeneTree" id="ENSGT00940000157270"/>
<dbReference type="OMA" id="PGQGEHC"/>
<dbReference type="Proteomes" id="UP000240080">
    <property type="component" value="Unplaced"/>
</dbReference>
<dbReference type="Bgee" id="ENSPPAG00000034992">
    <property type="expression patterns" value="Expressed in adult mammalian kidney and 1 other cell type or tissue"/>
</dbReference>
<dbReference type="GO" id="GO:0030054">
    <property type="term" value="C:cell junction"/>
    <property type="evidence" value="ECO:0007669"/>
    <property type="project" value="Ensembl"/>
</dbReference>
<dbReference type="GO" id="GO:0005654">
    <property type="term" value="C:nucleoplasm"/>
    <property type="evidence" value="ECO:0007669"/>
    <property type="project" value="Ensembl"/>
</dbReference>
<dbReference type="GO" id="GO:0001228">
    <property type="term" value="F:DNA-binding transcription activator activity, RNA polymerase II-specific"/>
    <property type="evidence" value="ECO:0007669"/>
    <property type="project" value="Ensembl"/>
</dbReference>
<dbReference type="GO" id="GO:0000978">
    <property type="term" value="F:RNA polymerase II cis-regulatory region sequence-specific DNA binding"/>
    <property type="evidence" value="ECO:0007669"/>
    <property type="project" value="TreeGrafter"/>
</dbReference>
<dbReference type="GO" id="GO:0009952">
    <property type="term" value="P:anterior/posterior pattern specification"/>
    <property type="evidence" value="ECO:0007669"/>
    <property type="project" value="Ensembl"/>
</dbReference>
<dbReference type="GO" id="GO:0048704">
    <property type="term" value="P:embryonic skeletal system morphogenesis"/>
    <property type="evidence" value="ECO:0007669"/>
    <property type="project" value="Ensembl"/>
</dbReference>
<dbReference type="GO" id="GO:0048863">
    <property type="term" value="P:stem cell differentiation"/>
    <property type="evidence" value="ECO:0007669"/>
    <property type="project" value="Ensembl"/>
</dbReference>
<dbReference type="CDD" id="cd00086">
    <property type="entry name" value="homeodomain"/>
    <property type="match status" value="1"/>
</dbReference>
<dbReference type="FunFam" id="1.10.10.60:FF:000029">
    <property type="entry name" value="Homeobox protein Hox-D4"/>
    <property type="match status" value="1"/>
</dbReference>
<dbReference type="Gene3D" id="1.10.10.60">
    <property type="entry name" value="Homeodomain-like"/>
    <property type="match status" value="1"/>
</dbReference>
<dbReference type="InterPro" id="IPR050609">
    <property type="entry name" value="Antp_homeobox_Deformed_sf"/>
</dbReference>
<dbReference type="InterPro" id="IPR001356">
    <property type="entry name" value="HD"/>
</dbReference>
<dbReference type="InterPro" id="IPR020479">
    <property type="entry name" value="HD_metazoa"/>
</dbReference>
<dbReference type="InterPro" id="IPR017995">
    <property type="entry name" value="Homeobox_antennapedia"/>
</dbReference>
<dbReference type="InterPro" id="IPR001827">
    <property type="entry name" value="Homeobox_Antennapedia_CS"/>
</dbReference>
<dbReference type="InterPro" id="IPR017970">
    <property type="entry name" value="Homeobox_CS"/>
</dbReference>
<dbReference type="InterPro" id="IPR009057">
    <property type="entry name" value="Homeodomain-like_sf"/>
</dbReference>
<dbReference type="PANTHER" id="PTHR45771:SF5">
    <property type="entry name" value="HOMEOBOX PROTEIN HOX-D4"/>
    <property type="match status" value="1"/>
</dbReference>
<dbReference type="PANTHER" id="PTHR45771">
    <property type="entry name" value="HOMEOTIC PROTEIN DEFORMED"/>
    <property type="match status" value="1"/>
</dbReference>
<dbReference type="Pfam" id="PF00046">
    <property type="entry name" value="Homeodomain"/>
    <property type="match status" value="1"/>
</dbReference>
<dbReference type="PRINTS" id="PR00025">
    <property type="entry name" value="ANTENNAPEDIA"/>
</dbReference>
<dbReference type="PRINTS" id="PR00024">
    <property type="entry name" value="HOMEOBOX"/>
</dbReference>
<dbReference type="SMART" id="SM00389">
    <property type="entry name" value="HOX"/>
    <property type="match status" value="1"/>
</dbReference>
<dbReference type="SUPFAM" id="SSF46689">
    <property type="entry name" value="Homeodomain-like"/>
    <property type="match status" value="1"/>
</dbReference>
<dbReference type="PROSITE" id="PS00032">
    <property type="entry name" value="ANTENNAPEDIA"/>
    <property type="match status" value="1"/>
</dbReference>
<dbReference type="PROSITE" id="PS00027">
    <property type="entry name" value="HOMEOBOX_1"/>
    <property type="match status" value="1"/>
</dbReference>
<dbReference type="PROSITE" id="PS50071">
    <property type="entry name" value="HOMEOBOX_2"/>
    <property type="match status" value="1"/>
</dbReference>
<comment type="function">
    <text evidence="1">Sequence-specific transcription factor which is part of a developmental regulatory system that provides cells with specific positional identities on the anterior-posterior axis.</text>
</comment>
<comment type="subunit">
    <text evidence="2">Forms a DNA-binding heterodimer with transcription factor PBX1.</text>
</comment>
<comment type="subcellular location">
    <subcellularLocation>
        <location evidence="3">Nucleus</location>
    </subcellularLocation>
</comment>
<comment type="similarity">
    <text evidence="5">Belongs to the Antp homeobox family. Deformed subfamily.</text>
</comment>